<accession>P64708</accession>
<accession>A0A1R3XVH7</accession>
<accession>Q11152</accession>
<accession>X2BF79</accession>
<proteinExistence type="inferred from homology"/>
<feature type="chain" id="PRO_0000080319" description="D-inositol 3-phosphate glycosyltransferase">
    <location>
        <begin position="1"/>
        <end position="480"/>
    </location>
</feature>
<feature type="region of interest" description="Disordered" evidence="4">
    <location>
        <begin position="1"/>
        <end position="42"/>
    </location>
</feature>
<feature type="binding site" evidence="1">
    <location>
        <position position="53"/>
    </location>
    <ligand>
        <name>1D-myo-inositol 3-phosphate</name>
        <dbReference type="ChEBI" id="CHEBI:58401"/>
    </ligand>
</feature>
<feature type="binding site" evidence="1">
    <location>
        <begin position="59"/>
        <end position="60"/>
    </location>
    <ligand>
        <name>UDP-N-acetyl-alpha-D-glucosamine</name>
        <dbReference type="ChEBI" id="CHEBI:57705"/>
    </ligand>
</feature>
<feature type="binding site" evidence="1">
    <location>
        <begin position="64"/>
        <end position="69"/>
    </location>
    <ligand>
        <name>1D-myo-inositol 3-phosphate</name>
        <dbReference type="ChEBI" id="CHEBI:58401"/>
    </ligand>
</feature>
<feature type="binding site" evidence="1">
    <location>
        <position position="67"/>
    </location>
    <ligand>
        <name>UDP-N-acetyl-alpha-D-glucosamine</name>
        <dbReference type="ChEBI" id="CHEBI:57705"/>
    </ligand>
</feature>
<feature type="binding site" evidence="1">
    <location>
        <position position="122"/>
    </location>
    <ligand>
        <name>1D-myo-inositol 3-phosphate</name>
        <dbReference type="ChEBI" id="CHEBI:58401"/>
    </ligand>
</feature>
<feature type="binding site" evidence="1">
    <location>
        <position position="155"/>
    </location>
    <ligand>
        <name>1D-myo-inositol 3-phosphate</name>
        <dbReference type="ChEBI" id="CHEBI:58401"/>
    </ligand>
</feature>
<feature type="binding site" evidence="1">
    <location>
        <position position="179"/>
    </location>
    <ligand>
        <name>1D-myo-inositol 3-phosphate</name>
        <dbReference type="ChEBI" id="CHEBI:58401"/>
    </ligand>
</feature>
<feature type="binding site" evidence="1">
    <location>
        <position position="199"/>
    </location>
    <ligand>
        <name>1D-myo-inositol 3-phosphate</name>
        <dbReference type="ChEBI" id="CHEBI:58401"/>
    </ligand>
</feature>
<feature type="binding site" evidence="1">
    <location>
        <position position="273"/>
    </location>
    <ligand>
        <name>UDP-N-acetyl-alpha-D-glucosamine</name>
        <dbReference type="ChEBI" id="CHEBI:57705"/>
    </ligand>
</feature>
<feature type="binding site" evidence="1">
    <location>
        <position position="278"/>
    </location>
    <ligand>
        <name>UDP-N-acetyl-alpha-D-glucosamine</name>
        <dbReference type="ChEBI" id="CHEBI:57705"/>
    </ligand>
</feature>
<feature type="binding site" evidence="1">
    <location>
        <position position="331"/>
    </location>
    <ligand>
        <name>UDP-N-acetyl-alpha-D-glucosamine</name>
        <dbReference type="ChEBI" id="CHEBI:57705"/>
    </ligand>
</feature>
<feature type="binding site" evidence="1">
    <location>
        <position position="340"/>
    </location>
    <ligand>
        <name>Mg(2+)</name>
        <dbReference type="ChEBI" id="CHEBI:18420"/>
    </ligand>
</feature>
<feature type="binding site" evidence="1">
    <location>
        <position position="341"/>
    </location>
    <ligand>
        <name>Mg(2+)</name>
        <dbReference type="ChEBI" id="CHEBI:18420"/>
    </ligand>
</feature>
<feature type="binding site" evidence="1">
    <location>
        <position position="343"/>
    </location>
    <ligand>
        <name>Mg(2+)</name>
        <dbReference type="ChEBI" id="CHEBI:18420"/>
    </ligand>
</feature>
<feature type="binding site" evidence="1">
    <location>
        <position position="353"/>
    </location>
    <ligand>
        <name>UDP-N-acetyl-alpha-D-glucosamine</name>
        <dbReference type="ChEBI" id="CHEBI:57705"/>
    </ligand>
</feature>
<feature type="binding site" evidence="1">
    <location>
        <position position="361"/>
    </location>
    <ligand>
        <name>UDP-N-acetyl-alpha-D-glucosamine</name>
        <dbReference type="ChEBI" id="CHEBI:57705"/>
    </ligand>
</feature>
<feature type="binding site" evidence="1">
    <location>
        <position position="367"/>
    </location>
    <ligand>
        <name>Mg(2+)</name>
        <dbReference type="ChEBI" id="CHEBI:18420"/>
    </ligand>
</feature>
<reference key="1">
    <citation type="journal article" date="2003" name="Proc. Natl. Acad. Sci. U.S.A.">
        <title>The complete genome sequence of Mycobacterium bovis.</title>
        <authorList>
            <person name="Garnier T."/>
            <person name="Eiglmeier K."/>
            <person name="Camus J.-C."/>
            <person name="Medina N."/>
            <person name="Mansoor H."/>
            <person name="Pryor M."/>
            <person name="Duthoy S."/>
            <person name="Grondin S."/>
            <person name="Lacroix C."/>
            <person name="Monsempe C."/>
            <person name="Simon S."/>
            <person name="Harris B."/>
            <person name="Atkin R."/>
            <person name="Doggett J."/>
            <person name="Mayes R."/>
            <person name="Keating L."/>
            <person name="Wheeler P.R."/>
            <person name="Parkhill J."/>
            <person name="Barrell B.G."/>
            <person name="Cole S.T."/>
            <person name="Gordon S.V."/>
            <person name="Hewinson R.G."/>
        </authorList>
    </citation>
    <scope>NUCLEOTIDE SEQUENCE [LARGE SCALE GENOMIC DNA]</scope>
    <source>
        <strain>ATCC BAA-935 / AF2122/97</strain>
    </source>
</reference>
<reference key="2">
    <citation type="journal article" date="2017" name="Genome Announc.">
        <title>Updated reference genome sequence and annotation of Mycobacterium bovis AF2122/97.</title>
        <authorList>
            <person name="Malone K.M."/>
            <person name="Farrell D."/>
            <person name="Stuber T.P."/>
            <person name="Schubert O.T."/>
            <person name="Aebersold R."/>
            <person name="Robbe-Austerman S."/>
            <person name="Gordon S.V."/>
        </authorList>
    </citation>
    <scope>NUCLEOTIDE SEQUENCE [LARGE SCALE GENOMIC DNA]</scope>
    <scope>GENOME REANNOTATION</scope>
    <source>
        <strain>ATCC BAA-935 / AF2122/97</strain>
    </source>
</reference>
<comment type="function">
    <text evidence="2 3">Catalyzes the transfer of a N-acetyl-glucosamine moiety to 1D-myo-inositol 3-phosphate to produce 1D-myo-inositol 2-acetamido-2-deoxy-glucopyranoside 3-phosphate in the mycothiol (MSH) biosynthesis pathway (By similarity). MSH and WhiB3 are probably part of a regulatory circuit that mediates gene expression upon acid stress (like that found in host macrophage phagosomes). MSH is one of the major redox buffers which protects bacteria against redox stressors and antibiotics; loss of MSH or ergothioneine (ERG, the other major redox buffer in this bacteria) leads to respiratory alterations and bioenergetic deficiencies that negatively impact virulence (By similarity).</text>
</comment>
<comment type="catalytic activity">
    <reaction>
        <text>1D-myo-inositol 3-phosphate + UDP-N-acetyl-alpha-D-glucosamine = 1D-myo-inositol 2-acetamido-2-deoxy-alpha-D-glucopyranoside 3-phosphate + UDP + H(+)</text>
        <dbReference type="Rhea" id="RHEA:26188"/>
        <dbReference type="ChEBI" id="CHEBI:15378"/>
        <dbReference type="ChEBI" id="CHEBI:57705"/>
        <dbReference type="ChEBI" id="CHEBI:58223"/>
        <dbReference type="ChEBI" id="CHEBI:58401"/>
        <dbReference type="ChEBI" id="CHEBI:58892"/>
        <dbReference type="EC" id="2.4.1.250"/>
    </reaction>
</comment>
<comment type="subunit">
    <text evidence="1">Homodimer.</text>
</comment>
<comment type="similarity">
    <text evidence="5">Belongs to the glycosyltransferase group 1 family. MshA subfamily.</text>
</comment>
<keyword id="KW-0328">Glycosyltransferase</keyword>
<keyword id="KW-0460">Magnesium</keyword>
<keyword id="KW-0479">Metal-binding</keyword>
<keyword id="KW-1185">Reference proteome</keyword>
<keyword id="KW-0808">Transferase</keyword>
<name>MSHA_MYCBO</name>
<evidence type="ECO:0000250" key="1"/>
<evidence type="ECO:0000250" key="2">
    <source>
        <dbReference type="UniProtKB" id="P9WMY7"/>
    </source>
</evidence>
<evidence type="ECO:0000255" key="3">
    <source>
        <dbReference type="HAMAP-Rule" id="MF_01695"/>
    </source>
</evidence>
<evidence type="ECO:0000256" key="4">
    <source>
        <dbReference type="SAM" id="MobiDB-lite"/>
    </source>
</evidence>
<evidence type="ECO:0000305" key="5"/>
<sequence>MAGVRHDDGSGLIAQRRPVRGEGATRSRGPSGPSNRNVSAADDPRRVALLAVHTSPLAQPGTGDAGGMNVYMLQSALHLARRGIEVEIFTRATASADPPVVRVAPGVLVRNVVAGPFEGLDKYDLPTQLCAFAAGVLRAEAVHEPGYYDIVHSHYWLSGQVGWLARDRWAVPLVHTAHTLAAVKNAALADGDGPEPPLRTVGEQQVVDEADRLIVNTDDEARQVISLHGADPARIDVVHPGVDLDVFRPGDRRAARAALGLPVDERVVAFVGRIQPLKAPDIVLRAAAKLPGVRIIVAGGPSGSGLASPDGLVRLADELGISARVTFLPPQSHTDLATLFRAADLVAVPSYSESFGLVAVEAQACGTPVVAAAVGGLPVAVRDGITGTLVSGHEVGQWADAIDHLLRLCAGPRGRVMSRAAARHAATFSWENTTDALLASYRRAIGEYNAERQRRGGEVISDLVAVGKPRHWTPRRGVGA</sequence>
<organism>
    <name type="scientific">Mycobacterium bovis (strain ATCC BAA-935 / AF2122/97)</name>
    <dbReference type="NCBI Taxonomy" id="233413"/>
    <lineage>
        <taxon>Bacteria</taxon>
        <taxon>Bacillati</taxon>
        <taxon>Actinomycetota</taxon>
        <taxon>Actinomycetes</taxon>
        <taxon>Mycobacteriales</taxon>
        <taxon>Mycobacteriaceae</taxon>
        <taxon>Mycobacterium</taxon>
        <taxon>Mycobacterium tuberculosis complex</taxon>
    </lineage>
</organism>
<dbReference type="EC" id="2.4.1.250"/>
<dbReference type="EMBL" id="LT708304">
    <property type="protein sequence ID" value="SIT99091.1"/>
    <property type="molecule type" value="Genomic_DNA"/>
</dbReference>
<dbReference type="RefSeq" id="NP_854159.1">
    <property type="nucleotide sequence ID" value="NC_002945.3"/>
</dbReference>
<dbReference type="RefSeq" id="WP_003402367.1">
    <property type="nucleotide sequence ID" value="NC_002945.4"/>
</dbReference>
<dbReference type="SMR" id="P64708"/>
<dbReference type="PATRIC" id="fig|233413.5.peg.538"/>
<dbReference type="Proteomes" id="UP000001419">
    <property type="component" value="Chromosome"/>
</dbReference>
<dbReference type="GO" id="GO:0008375">
    <property type="term" value="F:acetylglucosaminyltransferase activity"/>
    <property type="evidence" value="ECO:0007669"/>
    <property type="project" value="UniProtKB-UniRule"/>
</dbReference>
<dbReference type="GO" id="GO:0102710">
    <property type="term" value="F:D-inositol-3-phosphate glycosyltransferase activity"/>
    <property type="evidence" value="ECO:0007669"/>
    <property type="project" value="UniProtKB-EC"/>
</dbReference>
<dbReference type="GO" id="GO:0000287">
    <property type="term" value="F:magnesium ion binding"/>
    <property type="evidence" value="ECO:0007669"/>
    <property type="project" value="UniProtKB-UniRule"/>
</dbReference>
<dbReference type="GO" id="GO:0010125">
    <property type="term" value="P:mycothiol biosynthetic process"/>
    <property type="evidence" value="ECO:0007669"/>
    <property type="project" value="UniProtKB-UniRule"/>
</dbReference>
<dbReference type="CDD" id="cd03800">
    <property type="entry name" value="GT4_sucrose_synthase"/>
    <property type="match status" value="1"/>
</dbReference>
<dbReference type="FunFam" id="3.40.50.2000:FF:000265">
    <property type="entry name" value="D-inositol 3-phosphate glycosyltransferase"/>
    <property type="match status" value="1"/>
</dbReference>
<dbReference type="FunFam" id="3.40.50.2000:FF:000123">
    <property type="entry name" value="D-inositol-3-phosphate glycosyltransferase"/>
    <property type="match status" value="1"/>
</dbReference>
<dbReference type="Gene3D" id="3.40.50.2000">
    <property type="entry name" value="Glycogen Phosphorylase B"/>
    <property type="match status" value="2"/>
</dbReference>
<dbReference type="HAMAP" id="MF_01695">
    <property type="entry name" value="MshA"/>
    <property type="match status" value="1"/>
</dbReference>
<dbReference type="InterPro" id="IPR001296">
    <property type="entry name" value="Glyco_trans_1"/>
</dbReference>
<dbReference type="InterPro" id="IPR028098">
    <property type="entry name" value="Glyco_trans_4-like_N"/>
</dbReference>
<dbReference type="InterPro" id="IPR017814">
    <property type="entry name" value="Mycothiol_biosynthesis_MshA"/>
</dbReference>
<dbReference type="NCBIfam" id="TIGR03449">
    <property type="entry name" value="mycothiol_MshA"/>
    <property type="match status" value="1"/>
</dbReference>
<dbReference type="PANTHER" id="PTHR12526:SF510">
    <property type="entry name" value="D-INOSITOL 3-PHOSPHATE GLYCOSYLTRANSFERASE"/>
    <property type="match status" value="1"/>
</dbReference>
<dbReference type="PANTHER" id="PTHR12526">
    <property type="entry name" value="GLYCOSYLTRANSFERASE"/>
    <property type="match status" value="1"/>
</dbReference>
<dbReference type="Pfam" id="PF13579">
    <property type="entry name" value="Glyco_trans_4_4"/>
    <property type="match status" value="1"/>
</dbReference>
<dbReference type="Pfam" id="PF00534">
    <property type="entry name" value="Glycos_transf_1"/>
    <property type="match status" value="1"/>
</dbReference>
<dbReference type="SUPFAM" id="SSF53756">
    <property type="entry name" value="UDP-Glycosyltransferase/glycogen phosphorylase"/>
    <property type="match status" value="1"/>
</dbReference>
<gene>
    <name type="primary">mshA</name>
    <name type="ordered locus">BQ2027_MB0496</name>
</gene>
<protein>
    <recommendedName>
        <fullName>D-inositol 3-phosphate glycosyltransferase</fullName>
        <ecNumber>2.4.1.250</ecNumber>
    </recommendedName>
    <alternativeName>
        <fullName>N-acetylglucosamine-inositol-phosphate N-acetylglucosaminyltransferase</fullName>
        <shortName>GlcNAc-Ins-P N-acetylglucosaminyltransferase</shortName>
    </alternativeName>
</protein>